<evidence type="ECO:0000255" key="1">
    <source>
        <dbReference type="HAMAP-Rule" id="MF_01621"/>
    </source>
</evidence>
<dbReference type="EC" id="4.2.1.17" evidence="1"/>
<dbReference type="EC" id="5.1.2.3" evidence="1"/>
<dbReference type="EC" id="5.3.3.8" evidence="1"/>
<dbReference type="EC" id="1.1.1.35" evidence="1"/>
<dbReference type="EMBL" id="CP000083">
    <property type="protein sequence ID" value="AAZ26244.1"/>
    <property type="molecule type" value="Genomic_DNA"/>
</dbReference>
<dbReference type="RefSeq" id="WP_011041254.1">
    <property type="nucleotide sequence ID" value="NC_003910.7"/>
</dbReference>
<dbReference type="SMR" id="Q489W3"/>
<dbReference type="STRING" id="167879.CPS_0393"/>
<dbReference type="KEGG" id="cps:CPS_0393"/>
<dbReference type="eggNOG" id="COG1024">
    <property type="taxonomic scope" value="Bacteria"/>
</dbReference>
<dbReference type="eggNOG" id="COG1250">
    <property type="taxonomic scope" value="Bacteria"/>
</dbReference>
<dbReference type="HOGENOM" id="CLU_009834_16_3_6"/>
<dbReference type="UniPathway" id="UPA00659"/>
<dbReference type="Proteomes" id="UP000000547">
    <property type="component" value="Chromosome"/>
</dbReference>
<dbReference type="GO" id="GO:0036125">
    <property type="term" value="C:fatty acid beta-oxidation multienzyme complex"/>
    <property type="evidence" value="ECO:0007669"/>
    <property type="project" value="InterPro"/>
</dbReference>
<dbReference type="GO" id="GO:0008692">
    <property type="term" value="F:3-hydroxybutyryl-CoA epimerase activity"/>
    <property type="evidence" value="ECO:0007669"/>
    <property type="project" value="UniProtKB-UniRule"/>
</dbReference>
<dbReference type="GO" id="GO:0004165">
    <property type="term" value="F:delta(3)-delta(2)-enoyl-CoA isomerase activity"/>
    <property type="evidence" value="ECO:0007669"/>
    <property type="project" value="UniProtKB-UniRule"/>
</dbReference>
<dbReference type="GO" id="GO:0004300">
    <property type="term" value="F:enoyl-CoA hydratase activity"/>
    <property type="evidence" value="ECO:0007669"/>
    <property type="project" value="UniProtKB-UniRule"/>
</dbReference>
<dbReference type="GO" id="GO:0016509">
    <property type="term" value="F:long-chain-3-hydroxyacyl-CoA dehydrogenase activity"/>
    <property type="evidence" value="ECO:0007669"/>
    <property type="project" value="TreeGrafter"/>
</dbReference>
<dbReference type="GO" id="GO:0070403">
    <property type="term" value="F:NAD+ binding"/>
    <property type="evidence" value="ECO:0007669"/>
    <property type="project" value="InterPro"/>
</dbReference>
<dbReference type="GO" id="GO:0006635">
    <property type="term" value="P:fatty acid beta-oxidation"/>
    <property type="evidence" value="ECO:0007669"/>
    <property type="project" value="UniProtKB-UniRule"/>
</dbReference>
<dbReference type="CDD" id="cd06558">
    <property type="entry name" value="crotonase-like"/>
    <property type="match status" value="1"/>
</dbReference>
<dbReference type="FunFam" id="3.40.50.720:FF:000009">
    <property type="entry name" value="Fatty oxidation complex, alpha subunit"/>
    <property type="match status" value="1"/>
</dbReference>
<dbReference type="Gene3D" id="1.10.1040.50">
    <property type="match status" value="1"/>
</dbReference>
<dbReference type="Gene3D" id="3.90.226.10">
    <property type="entry name" value="2-enoyl-CoA Hydratase, Chain A, domain 1"/>
    <property type="match status" value="1"/>
</dbReference>
<dbReference type="Gene3D" id="3.40.50.720">
    <property type="entry name" value="NAD(P)-binding Rossmann-like Domain"/>
    <property type="match status" value="1"/>
</dbReference>
<dbReference type="HAMAP" id="MF_01621">
    <property type="entry name" value="FadB"/>
    <property type="match status" value="1"/>
</dbReference>
<dbReference type="InterPro" id="IPR006180">
    <property type="entry name" value="3-OHacyl-CoA_DH_CS"/>
</dbReference>
<dbReference type="InterPro" id="IPR006176">
    <property type="entry name" value="3-OHacyl-CoA_DH_NAD-bd"/>
</dbReference>
<dbReference type="InterPro" id="IPR006108">
    <property type="entry name" value="3HC_DH_C"/>
</dbReference>
<dbReference type="InterPro" id="IPR008927">
    <property type="entry name" value="6-PGluconate_DH-like_C_sf"/>
</dbReference>
<dbReference type="InterPro" id="IPR029045">
    <property type="entry name" value="ClpP/crotonase-like_dom_sf"/>
</dbReference>
<dbReference type="InterPro" id="IPR018376">
    <property type="entry name" value="Enoyl-CoA_hyd/isom_CS"/>
</dbReference>
<dbReference type="InterPro" id="IPR001753">
    <property type="entry name" value="Enoyl-CoA_hydra/iso"/>
</dbReference>
<dbReference type="InterPro" id="IPR050136">
    <property type="entry name" value="FA_oxidation_alpha_subunit"/>
</dbReference>
<dbReference type="InterPro" id="IPR012799">
    <property type="entry name" value="FadB"/>
</dbReference>
<dbReference type="InterPro" id="IPR036291">
    <property type="entry name" value="NAD(P)-bd_dom_sf"/>
</dbReference>
<dbReference type="NCBIfam" id="TIGR02437">
    <property type="entry name" value="FadB"/>
    <property type="match status" value="1"/>
</dbReference>
<dbReference type="NCBIfam" id="NF008727">
    <property type="entry name" value="PRK11730.1"/>
    <property type="match status" value="1"/>
</dbReference>
<dbReference type="PANTHER" id="PTHR43612">
    <property type="entry name" value="TRIFUNCTIONAL ENZYME SUBUNIT ALPHA"/>
    <property type="match status" value="1"/>
</dbReference>
<dbReference type="PANTHER" id="PTHR43612:SF3">
    <property type="entry name" value="TRIFUNCTIONAL ENZYME SUBUNIT ALPHA, MITOCHONDRIAL"/>
    <property type="match status" value="1"/>
</dbReference>
<dbReference type="Pfam" id="PF00725">
    <property type="entry name" value="3HCDH"/>
    <property type="match status" value="1"/>
</dbReference>
<dbReference type="Pfam" id="PF02737">
    <property type="entry name" value="3HCDH_N"/>
    <property type="match status" value="1"/>
</dbReference>
<dbReference type="Pfam" id="PF00378">
    <property type="entry name" value="ECH_1"/>
    <property type="match status" value="1"/>
</dbReference>
<dbReference type="SUPFAM" id="SSF48179">
    <property type="entry name" value="6-phosphogluconate dehydrogenase C-terminal domain-like"/>
    <property type="match status" value="2"/>
</dbReference>
<dbReference type="SUPFAM" id="SSF52096">
    <property type="entry name" value="ClpP/crotonase"/>
    <property type="match status" value="1"/>
</dbReference>
<dbReference type="SUPFAM" id="SSF51735">
    <property type="entry name" value="NAD(P)-binding Rossmann-fold domains"/>
    <property type="match status" value="1"/>
</dbReference>
<dbReference type="PROSITE" id="PS00067">
    <property type="entry name" value="3HCDH"/>
    <property type="match status" value="1"/>
</dbReference>
<dbReference type="PROSITE" id="PS00166">
    <property type="entry name" value="ENOYL_COA_HYDRATASE"/>
    <property type="match status" value="1"/>
</dbReference>
<protein>
    <recommendedName>
        <fullName evidence="1">Fatty acid oxidation complex subunit alpha</fullName>
    </recommendedName>
    <domain>
        <recommendedName>
            <fullName evidence="1">Enoyl-CoA hydratase/Delta(3)-cis-Delta(2)-trans-enoyl-CoA isomerase/3-hydroxybutyryl-CoA epimerase</fullName>
            <ecNumber evidence="1">4.2.1.17</ecNumber>
            <ecNumber evidence="1">5.1.2.3</ecNumber>
            <ecNumber evidence="1">5.3.3.8</ecNumber>
        </recommendedName>
    </domain>
    <domain>
        <recommendedName>
            <fullName evidence="1">3-hydroxyacyl-CoA dehydrogenase</fullName>
            <ecNumber evidence="1">1.1.1.35</ecNumber>
        </recommendedName>
    </domain>
</protein>
<keyword id="KW-0276">Fatty acid metabolism</keyword>
<keyword id="KW-0413">Isomerase</keyword>
<keyword id="KW-0442">Lipid degradation</keyword>
<keyword id="KW-0443">Lipid metabolism</keyword>
<keyword id="KW-0456">Lyase</keyword>
<keyword id="KW-0511">Multifunctional enzyme</keyword>
<keyword id="KW-0520">NAD</keyword>
<keyword id="KW-0560">Oxidoreductase</keyword>
<organism>
    <name type="scientific">Colwellia psychrerythraea (strain 34H / ATCC BAA-681)</name>
    <name type="common">Vibrio psychroerythus</name>
    <dbReference type="NCBI Taxonomy" id="167879"/>
    <lineage>
        <taxon>Bacteria</taxon>
        <taxon>Pseudomonadati</taxon>
        <taxon>Pseudomonadota</taxon>
        <taxon>Gammaproteobacteria</taxon>
        <taxon>Alteromonadales</taxon>
        <taxon>Colwelliaceae</taxon>
        <taxon>Colwellia</taxon>
    </lineage>
</organism>
<accession>Q489W3</accession>
<sequence length="722" mass="77146">MIYQGKSLSAQLLEDGIVEFKFDAQGSVNKFDQATFEEYIAVVAAINNCSEAKGVIVTSGKSTFIVGADITEFLVSFSQPEDALASWAKKASDVFDSFEDIQLPTIAAINGIALGGGCEMTLACDYRVAATTASIGLPEVKLGLMPGFGGTVRLPRLIGFDNAATWMSTGKAFKPAAALAQGAIDAVVEPENLQAAAISMLKLAIDGKLDWRAKRQPKLEALKLSPTELIMSSTTCKGMIAAKAGKHYPAPMVMINTLIASANLDRTGAMAAENTGFAKLAKTDAATAQIGLFMADQVIKGKAKKASKLATKAVNKAAVLGAGIMGGGIAYQSAYKGTPIIMKDINDQALDLGLTTATGILTKQVERGRMNAKKMAGVLNNITPSLSYDSVKDVDIVVEAVVENPKVKGMVLAEVEGVIGEDAILTSNTSTISIDLLAQSVKRPQNFCGMHFFNPVNKMPLVEVIRGKDTSDETVAAVVAYAAKMGKSPIVVNDCPGFYVNRVLFPYFAGFSQLVLEGADFTAIDKVMEKQFGWPMGPAYLLDVVGVDTADHCTGVMSSGFPTRMKKIDNDPVSTLYANERLGQKNGKGFYDHIKDKRGRPMKVPAPVAYELLGQHCADKKDFSSEEIIARMMIPMVNEVVRCLEEGVVDTAAEADMGLIYGVGFPPFRGGAIRYLETLGLDNFIAMADKYTDLGEIYHVTDGLREMAKSGKSYFTTDVKLA</sequence>
<gene>
    <name evidence="1" type="primary">fadB</name>
    <name type="ordered locus">CPS_0393</name>
</gene>
<feature type="chain" id="PRO_0000109265" description="Fatty acid oxidation complex subunit alpha">
    <location>
        <begin position="1"/>
        <end position="722"/>
    </location>
</feature>
<feature type="region of interest" description="Enoyl-CoA hydratase/isomerase" evidence="1">
    <location>
        <begin position="1"/>
        <end position="189"/>
    </location>
</feature>
<feature type="region of interest" description="3-hydroxyacyl-CoA dehydrogenase" evidence="1">
    <location>
        <begin position="311"/>
        <end position="722"/>
    </location>
</feature>
<feature type="active site" description="For 3-hydroxyacyl-CoA dehydrogenase activity" evidence="1">
    <location>
        <position position="451"/>
    </location>
</feature>
<feature type="binding site" evidence="1">
    <location>
        <position position="296"/>
    </location>
    <ligand>
        <name>substrate</name>
    </ligand>
</feature>
<feature type="binding site" evidence="1">
    <location>
        <position position="325"/>
    </location>
    <ligand>
        <name>NAD(+)</name>
        <dbReference type="ChEBI" id="CHEBI:57540"/>
    </ligand>
</feature>
<feature type="binding site" evidence="1">
    <location>
        <position position="344"/>
    </location>
    <ligand>
        <name>NAD(+)</name>
        <dbReference type="ChEBI" id="CHEBI:57540"/>
    </ligand>
</feature>
<feature type="binding site" evidence="1">
    <location>
        <begin position="401"/>
        <end position="403"/>
    </location>
    <ligand>
        <name>NAD(+)</name>
        <dbReference type="ChEBI" id="CHEBI:57540"/>
    </ligand>
</feature>
<feature type="binding site" evidence="1">
    <location>
        <position position="408"/>
    </location>
    <ligand>
        <name>NAD(+)</name>
        <dbReference type="ChEBI" id="CHEBI:57540"/>
    </ligand>
</feature>
<feature type="binding site" evidence="1">
    <location>
        <position position="430"/>
    </location>
    <ligand>
        <name>NAD(+)</name>
        <dbReference type="ChEBI" id="CHEBI:57540"/>
    </ligand>
</feature>
<feature type="binding site" evidence="1">
    <location>
        <position position="454"/>
    </location>
    <ligand>
        <name>NAD(+)</name>
        <dbReference type="ChEBI" id="CHEBI:57540"/>
    </ligand>
</feature>
<feature type="binding site" evidence="1">
    <location>
        <position position="501"/>
    </location>
    <ligand>
        <name>substrate</name>
    </ligand>
</feature>
<feature type="binding site" evidence="1">
    <location>
        <position position="661"/>
    </location>
    <ligand>
        <name>substrate</name>
    </ligand>
</feature>
<feature type="site" description="Important for catalytic activity" evidence="1">
    <location>
        <position position="119"/>
    </location>
</feature>
<feature type="site" description="Important for catalytic activity" evidence="1">
    <location>
        <position position="139"/>
    </location>
</feature>
<proteinExistence type="inferred from homology"/>
<reference key="1">
    <citation type="journal article" date="2005" name="Proc. Natl. Acad. Sci. U.S.A.">
        <title>The psychrophilic lifestyle as revealed by the genome sequence of Colwellia psychrerythraea 34H through genomic and proteomic analyses.</title>
        <authorList>
            <person name="Methe B.A."/>
            <person name="Nelson K.E."/>
            <person name="Deming J.W."/>
            <person name="Momen B."/>
            <person name="Melamud E."/>
            <person name="Zhang X."/>
            <person name="Moult J."/>
            <person name="Madupu R."/>
            <person name="Nelson W.C."/>
            <person name="Dodson R.J."/>
            <person name="Brinkac L.M."/>
            <person name="Daugherty S.C."/>
            <person name="Durkin A.S."/>
            <person name="DeBoy R.T."/>
            <person name="Kolonay J.F."/>
            <person name="Sullivan S.A."/>
            <person name="Zhou L."/>
            <person name="Davidsen T.M."/>
            <person name="Wu M."/>
            <person name="Huston A.L."/>
            <person name="Lewis M."/>
            <person name="Weaver B."/>
            <person name="Weidman J.F."/>
            <person name="Khouri H."/>
            <person name="Utterback T.R."/>
            <person name="Feldblyum T.V."/>
            <person name="Fraser C.M."/>
        </authorList>
    </citation>
    <scope>NUCLEOTIDE SEQUENCE [LARGE SCALE GENOMIC DNA]</scope>
    <source>
        <strain>34H / ATCC BAA-681</strain>
    </source>
</reference>
<name>FADB_COLP3</name>
<comment type="function">
    <text evidence="1">Involved in the aerobic and anaerobic degradation of long-chain fatty acids via beta-oxidation cycle. Catalyzes the formation of 3-oxoacyl-CoA from enoyl-CoA via L-3-hydroxyacyl-CoA. It can also use D-3-hydroxyacyl-CoA and cis-3-enoyl-CoA as substrate.</text>
</comment>
<comment type="catalytic activity">
    <reaction evidence="1">
        <text>a (3S)-3-hydroxyacyl-CoA + NAD(+) = a 3-oxoacyl-CoA + NADH + H(+)</text>
        <dbReference type="Rhea" id="RHEA:22432"/>
        <dbReference type="ChEBI" id="CHEBI:15378"/>
        <dbReference type="ChEBI" id="CHEBI:57318"/>
        <dbReference type="ChEBI" id="CHEBI:57540"/>
        <dbReference type="ChEBI" id="CHEBI:57945"/>
        <dbReference type="ChEBI" id="CHEBI:90726"/>
        <dbReference type="EC" id="1.1.1.35"/>
    </reaction>
</comment>
<comment type="catalytic activity">
    <reaction evidence="1">
        <text>a (3S)-3-hydroxyacyl-CoA = a (2E)-enoyl-CoA + H2O</text>
        <dbReference type="Rhea" id="RHEA:16105"/>
        <dbReference type="ChEBI" id="CHEBI:15377"/>
        <dbReference type="ChEBI" id="CHEBI:57318"/>
        <dbReference type="ChEBI" id="CHEBI:58856"/>
        <dbReference type="EC" id="4.2.1.17"/>
    </reaction>
</comment>
<comment type="catalytic activity">
    <reaction evidence="1">
        <text>a 4-saturated-(3S)-3-hydroxyacyl-CoA = a (3E)-enoyl-CoA + H2O</text>
        <dbReference type="Rhea" id="RHEA:20724"/>
        <dbReference type="ChEBI" id="CHEBI:15377"/>
        <dbReference type="ChEBI" id="CHEBI:58521"/>
        <dbReference type="ChEBI" id="CHEBI:137480"/>
        <dbReference type="EC" id="4.2.1.17"/>
    </reaction>
</comment>
<comment type="catalytic activity">
    <reaction evidence="1">
        <text>(3S)-3-hydroxybutanoyl-CoA = (3R)-3-hydroxybutanoyl-CoA</text>
        <dbReference type="Rhea" id="RHEA:21760"/>
        <dbReference type="ChEBI" id="CHEBI:57315"/>
        <dbReference type="ChEBI" id="CHEBI:57316"/>
        <dbReference type="EC" id="5.1.2.3"/>
    </reaction>
</comment>
<comment type="catalytic activity">
    <reaction evidence="1">
        <text>a (3Z)-enoyl-CoA = a 4-saturated (2E)-enoyl-CoA</text>
        <dbReference type="Rhea" id="RHEA:45900"/>
        <dbReference type="ChEBI" id="CHEBI:85097"/>
        <dbReference type="ChEBI" id="CHEBI:85489"/>
        <dbReference type="EC" id="5.3.3.8"/>
    </reaction>
</comment>
<comment type="catalytic activity">
    <reaction evidence="1">
        <text>a (3E)-enoyl-CoA = a 4-saturated (2E)-enoyl-CoA</text>
        <dbReference type="Rhea" id="RHEA:45228"/>
        <dbReference type="ChEBI" id="CHEBI:58521"/>
        <dbReference type="ChEBI" id="CHEBI:85097"/>
        <dbReference type="EC" id="5.3.3.8"/>
    </reaction>
</comment>
<comment type="pathway">
    <text evidence="1">Lipid metabolism; fatty acid beta-oxidation.</text>
</comment>
<comment type="subunit">
    <text evidence="1">Heterotetramer of two alpha chains (FadB) and two beta chains (FadA).</text>
</comment>
<comment type="similarity">
    <text evidence="1">In the N-terminal section; belongs to the enoyl-CoA hydratase/isomerase family.</text>
</comment>
<comment type="similarity">
    <text evidence="1">In the C-terminal section; belongs to the 3-hydroxyacyl-CoA dehydrogenase family.</text>
</comment>